<gene>
    <name evidence="1" type="primary">ispE</name>
    <name type="ordered locus">PSPTO_1105</name>
</gene>
<comment type="function">
    <text evidence="1">Catalyzes the phosphorylation of the position 2 hydroxy group of 4-diphosphocytidyl-2C-methyl-D-erythritol.</text>
</comment>
<comment type="catalytic activity">
    <reaction evidence="1">
        <text>4-CDP-2-C-methyl-D-erythritol + ATP = 4-CDP-2-C-methyl-D-erythritol 2-phosphate + ADP + H(+)</text>
        <dbReference type="Rhea" id="RHEA:18437"/>
        <dbReference type="ChEBI" id="CHEBI:15378"/>
        <dbReference type="ChEBI" id="CHEBI:30616"/>
        <dbReference type="ChEBI" id="CHEBI:57823"/>
        <dbReference type="ChEBI" id="CHEBI:57919"/>
        <dbReference type="ChEBI" id="CHEBI:456216"/>
        <dbReference type="EC" id="2.7.1.148"/>
    </reaction>
</comment>
<comment type="pathway">
    <text evidence="1">Isoprenoid biosynthesis; isopentenyl diphosphate biosynthesis via DXP pathway; isopentenyl diphosphate from 1-deoxy-D-xylulose 5-phosphate: step 3/6.</text>
</comment>
<comment type="similarity">
    <text evidence="1">Belongs to the GHMP kinase family. IspE subfamily.</text>
</comment>
<evidence type="ECO:0000255" key="1">
    <source>
        <dbReference type="HAMAP-Rule" id="MF_00061"/>
    </source>
</evidence>
<organism>
    <name type="scientific">Pseudomonas syringae pv. tomato (strain ATCC BAA-871 / DC3000)</name>
    <dbReference type="NCBI Taxonomy" id="223283"/>
    <lineage>
        <taxon>Bacteria</taxon>
        <taxon>Pseudomonadati</taxon>
        <taxon>Pseudomonadota</taxon>
        <taxon>Gammaproteobacteria</taxon>
        <taxon>Pseudomonadales</taxon>
        <taxon>Pseudomonadaceae</taxon>
        <taxon>Pseudomonas</taxon>
    </lineage>
</organism>
<proteinExistence type="inferred from homology"/>
<protein>
    <recommendedName>
        <fullName evidence="1">4-diphosphocytidyl-2-C-methyl-D-erythritol kinase</fullName>
        <shortName evidence="1">CMK</shortName>
        <ecNumber evidence="1">2.7.1.148</ecNumber>
    </recommendedName>
    <alternativeName>
        <fullName evidence="1">4-(cytidine-5'-diphospho)-2-C-methyl-D-erythritol kinase</fullName>
    </alternativeName>
</protein>
<accession>Q888C5</accession>
<sequence>MVEAQLVLPAPAKLNLMLHILGRRPDGYHELQTLFQFLDYGDELGFALRQDGVIRLQTDVPGVAHDSNLIVKAARALQKQSGCTLGMDIWLEKRLPMGGGIGGGSSDAATTLLGLNHLWQLGWDEDRLAQLGLTLGADVPVFVRGHAAFAEGVGEILTPVDPEEPWYLVLVPQVAVSTAEIFSDPLLTRDTAPIKVRPVPKGNSRNDCKAAVERRYPEVRNALNLLGKFTEAKLTGTGSCVFGAFPNKAEADKVSALLTETLTGFVAKGSNISMLHRKLQIL</sequence>
<feature type="chain" id="PRO_0000189251" description="4-diphosphocytidyl-2-C-methyl-D-erythritol kinase">
    <location>
        <begin position="1"/>
        <end position="282"/>
    </location>
</feature>
<feature type="active site" evidence="1">
    <location>
        <position position="13"/>
    </location>
</feature>
<feature type="active site" evidence="1">
    <location>
        <position position="138"/>
    </location>
</feature>
<feature type="binding site" evidence="1">
    <location>
        <begin position="96"/>
        <end position="106"/>
    </location>
    <ligand>
        <name>ATP</name>
        <dbReference type="ChEBI" id="CHEBI:30616"/>
    </ligand>
</feature>
<name>ISPE_PSESM</name>
<keyword id="KW-0067">ATP-binding</keyword>
<keyword id="KW-0414">Isoprene biosynthesis</keyword>
<keyword id="KW-0418">Kinase</keyword>
<keyword id="KW-0547">Nucleotide-binding</keyword>
<keyword id="KW-1185">Reference proteome</keyword>
<keyword id="KW-0808">Transferase</keyword>
<reference key="1">
    <citation type="journal article" date="2003" name="Proc. Natl. Acad. Sci. U.S.A.">
        <title>The complete genome sequence of the Arabidopsis and tomato pathogen Pseudomonas syringae pv. tomato DC3000.</title>
        <authorList>
            <person name="Buell C.R."/>
            <person name="Joardar V."/>
            <person name="Lindeberg M."/>
            <person name="Selengut J."/>
            <person name="Paulsen I.T."/>
            <person name="Gwinn M.L."/>
            <person name="Dodson R.J."/>
            <person name="DeBoy R.T."/>
            <person name="Durkin A.S."/>
            <person name="Kolonay J.F."/>
            <person name="Madupu R."/>
            <person name="Daugherty S.C."/>
            <person name="Brinkac L.M."/>
            <person name="Beanan M.J."/>
            <person name="Haft D.H."/>
            <person name="Nelson W.C."/>
            <person name="Davidsen T.M."/>
            <person name="Zafar N."/>
            <person name="Zhou L."/>
            <person name="Liu J."/>
            <person name="Yuan Q."/>
            <person name="Khouri H.M."/>
            <person name="Fedorova N.B."/>
            <person name="Tran B."/>
            <person name="Russell D."/>
            <person name="Berry K.J."/>
            <person name="Utterback T.R."/>
            <person name="Van Aken S.E."/>
            <person name="Feldblyum T.V."/>
            <person name="D'Ascenzo M."/>
            <person name="Deng W.-L."/>
            <person name="Ramos A.R."/>
            <person name="Alfano J.R."/>
            <person name="Cartinhour S."/>
            <person name="Chatterjee A.K."/>
            <person name="Delaney T.P."/>
            <person name="Lazarowitz S.G."/>
            <person name="Martin G.B."/>
            <person name="Schneider D.J."/>
            <person name="Tang X."/>
            <person name="Bender C.L."/>
            <person name="White O."/>
            <person name="Fraser C.M."/>
            <person name="Collmer A."/>
        </authorList>
    </citation>
    <scope>NUCLEOTIDE SEQUENCE [LARGE SCALE GENOMIC DNA]</scope>
    <source>
        <strain>ATCC BAA-871 / DC3000</strain>
    </source>
</reference>
<dbReference type="EC" id="2.7.1.148" evidence="1"/>
<dbReference type="EMBL" id="AE016853">
    <property type="protein sequence ID" value="AAO54634.1"/>
    <property type="molecule type" value="Genomic_DNA"/>
</dbReference>
<dbReference type="RefSeq" id="NP_790939.1">
    <property type="nucleotide sequence ID" value="NC_004578.1"/>
</dbReference>
<dbReference type="RefSeq" id="WP_005768868.1">
    <property type="nucleotide sequence ID" value="NC_004578.1"/>
</dbReference>
<dbReference type="SMR" id="Q888C5"/>
<dbReference type="STRING" id="223283.PSPTO_1105"/>
<dbReference type="GeneID" id="1182741"/>
<dbReference type="KEGG" id="pst:PSPTO_1105"/>
<dbReference type="PATRIC" id="fig|223283.9.peg.1115"/>
<dbReference type="eggNOG" id="COG1947">
    <property type="taxonomic scope" value="Bacteria"/>
</dbReference>
<dbReference type="HOGENOM" id="CLU_053057_3_0_6"/>
<dbReference type="OrthoDB" id="9809438at2"/>
<dbReference type="PhylomeDB" id="Q888C5"/>
<dbReference type="UniPathway" id="UPA00056">
    <property type="reaction ID" value="UER00094"/>
</dbReference>
<dbReference type="Proteomes" id="UP000002515">
    <property type="component" value="Chromosome"/>
</dbReference>
<dbReference type="GO" id="GO:0050515">
    <property type="term" value="F:4-(cytidine 5'-diphospho)-2-C-methyl-D-erythritol kinase activity"/>
    <property type="evidence" value="ECO:0007669"/>
    <property type="project" value="UniProtKB-UniRule"/>
</dbReference>
<dbReference type="GO" id="GO:0005524">
    <property type="term" value="F:ATP binding"/>
    <property type="evidence" value="ECO:0007669"/>
    <property type="project" value="UniProtKB-UniRule"/>
</dbReference>
<dbReference type="GO" id="GO:0019288">
    <property type="term" value="P:isopentenyl diphosphate biosynthetic process, methylerythritol 4-phosphate pathway"/>
    <property type="evidence" value="ECO:0007669"/>
    <property type="project" value="UniProtKB-UniRule"/>
</dbReference>
<dbReference type="GO" id="GO:0016114">
    <property type="term" value="P:terpenoid biosynthetic process"/>
    <property type="evidence" value="ECO:0007669"/>
    <property type="project" value="InterPro"/>
</dbReference>
<dbReference type="FunFam" id="3.30.230.10:FF:000022">
    <property type="entry name" value="4-diphosphocytidyl-2-C-methyl-D-erythritol kinase"/>
    <property type="match status" value="1"/>
</dbReference>
<dbReference type="Gene3D" id="3.30.230.10">
    <property type="match status" value="1"/>
</dbReference>
<dbReference type="Gene3D" id="3.30.70.890">
    <property type="entry name" value="GHMP kinase, C-terminal domain"/>
    <property type="match status" value="1"/>
</dbReference>
<dbReference type="HAMAP" id="MF_00061">
    <property type="entry name" value="IspE"/>
    <property type="match status" value="1"/>
</dbReference>
<dbReference type="InterPro" id="IPR013750">
    <property type="entry name" value="GHMP_kinase_C_dom"/>
</dbReference>
<dbReference type="InterPro" id="IPR036554">
    <property type="entry name" value="GHMP_kinase_C_sf"/>
</dbReference>
<dbReference type="InterPro" id="IPR006204">
    <property type="entry name" value="GHMP_kinase_N_dom"/>
</dbReference>
<dbReference type="InterPro" id="IPR004424">
    <property type="entry name" value="IspE"/>
</dbReference>
<dbReference type="InterPro" id="IPR020568">
    <property type="entry name" value="Ribosomal_Su5_D2-typ_SF"/>
</dbReference>
<dbReference type="InterPro" id="IPR014721">
    <property type="entry name" value="Ribsml_uS5_D2-typ_fold_subgr"/>
</dbReference>
<dbReference type="NCBIfam" id="TIGR00154">
    <property type="entry name" value="ispE"/>
    <property type="match status" value="1"/>
</dbReference>
<dbReference type="PANTHER" id="PTHR43527">
    <property type="entry name" value="4-DIPHOSPHOCYTIDYL-2-C-METHYL-D-ERYTHRITOL KINASE, CHLOROPLASTIC"/>
    <property type="match status" value="1"/>
</dbReference>
<dbReference type="PANTHER" id="PTHR43527:SF2">
    <property type="entry name" value="4-DIPHOSPHOCYTIDYL-2-C-METHYL-D-ERYTHRITOL KINASE, CHLOROPLASTIC"/>
    <property type="match status" value="1"/>
</dbReference>
<dbReference type="Pfam" id="PF08544">
    <property type="entry name" value="GHMP_kinases_C"/>
    <property type="match status" value="1"/>
</dbReference>
<dbReference type="Pfam" id="PF00288">
    <property type="entry name" value="GHMP_kinases_N"/>
    <property type="match status" value="1"/>
</dbReference>
<dbReference type="PIRSF" id="PIRSF010376">
    <property type="entry name" value="IspE"/>
    <property type="match status" value="1"/>
</dbReference>
<dbReference type="SUPFAM" id="SSF55060">
    <property type="entry name" value="GHMP Kinase, C-terminal domain"/>
    <property type="match status" value="1"/>
</dbReference>
<dbReference type="SUPFAM" id="SSF54211">
    <property type="entry name" value="Ribosomal protein S5 domain 2-like"/>
    <property type="match status" value="1"/>
</dbReference>